<gene>
    <name evidence="7 10" type="primary">ima-2</name>
    <name type="ORF">F26B1.3</name>
</gene>
<sequence length="531" mass="59176">MTLTETSLSHNAEEGKDEGGRLQQYKNLTKHEELRRRRTECSVEIRKQKGADMMMKRRNIVDVDEGGNSESELEEPEKISHQQSSTRLSNDEIRAILSNNPSEDDMVRCFESLRKSLSKTKNPPIDEVIHCGLLQALVQALSVENERVQYEAAWALTNIVSGSTEQTIAAVEAGVTIPLIHLSVHQSAQISEQALWAVANIAGDSSQLRDYVIKCHGVEALMHLMEKVDQLGDSHVRTIAWAFSNMCRHKNPHAPLEVLRVLSKGLVKLVQHTDRQVRQDACWAVSYLTDGPDEQIELARESGVLPHVVAFFKEAENLVAPALRTLGNVATGNDSLTQAVIDLGSLDEILPLMEKTRSSSIVKECCWLVSNIIAGTQKQIQAVLDANLLPVLINVLKSGDHKCQFEASWALSNLAQGGTNRQVVAMLEDNVVPALCQALLQTNTDMLNNTLETLYTLMLTVQNGYPHKVDILHDQVEENGGLDSLERLQESQSEQIYTQAYRIITQFFTDDDAGEKESHENADPQDNKWSF</sequence>
<accession>P91276</accession>
<reference evidence="8" key="1">
    <citation type="journal article" date="2001" name="Development">
        <title>Germline and developmental roles of the nuclear transport factor importin alpha3 in C. elegans.</title>
        <authorList>
            <person name="Geles K.G."/>
            <person name="Adam S.A."/>
        </authorList>
    </citation>
    <scope>NUCLEOTIDE SEQUENCE [MRNA]</scope>
    <scope>FUNCTION</scope>
    <scope>SUBUNIT</scope>
    <scope>SUBCELLULAR LOCATION</scope>
    <scope>TISSUE SPECIFICITY</scope>
    <scope>DEVELOPMENTAL STAGE</scope>
</reference>
<reference key="2">
    <citation type="journal article" date="1998" name="Science">
        <title>Genome sequence of the nematode C. elegans: a platform for investigating biology.</title>
        <authorList>
            <consortium name="The C. elegans sequencing consortium"/>
        </authorList>
    </citation>
    <scope>NUCLEOTIDE SEQUENCE [LARGE SCALE GENOMIC DNA]</scope>
    <source>
        <strain>Bristol N2</strain>
    </source>
</reference>
<reference evidence="8" key="3">
    <citation type="submission" date="2000-12" db="EMBL/GenBank/DDBJ databases">
        <title>The Caenorhabditis elegans transcriptome project, a complementary view of the genome.</title>
        <authorList>
            <person name="Kohara Y."/>
            <person name="Shin-i T."/>
            <person name="Suzuki Y."/>
            <person name="Sugano S."/>
            <person name="Potdevin M."/>
            <person name="Thierry-Mieg Y."/>
            <person name="Thierry-Mieg D."/>
            <person name="Thierry-Mieg J."/>
        </authorList>
    </citation>
    <scope>NUCLEOTIDE SEQUENCE [LARGE SCALE MRNA]</scope>
    <source>
        <strain>Bristol N2</strain>
    </source>
</reference>
<reference key="4">
    <citation type="journal article" date="2002" name="Mol. Biol. Cell">
        <title>A role for Caenorhabditis elegans importin IMA-2 in germ line and embryonic mitosis.</title>
        <authorList>
            <person name="Geles K.G."/>
            <person name="Johnson J.J."/>
            <person name="Jong S."/>
            <person name="Adam S.A."/>
        </authorList>
    </citation>
    <scope>FUNCTION</scope>
    <scope>SUBCELLULAR LOCATION</scope>
    <scope>TISSUE SPECIFICITY</scope>
</reference>
<reference key="5">
    <citation type="journal article" date="2019" name="Genetics">
        <title>A novel role for alpha-importins and Akirin in establishment of meiotic sister chromatid cohesion in Caenorhabditis elegans.</title>
        <authorList>
            <person name="Bowman R."/>
            <person name="Balukof N."/>
            <person name="Ford T."/>
            <person name="Smolikove S."/>
        </authorList>
    </citation>
    <scope>FUNCTION</scope>
    <scope>SUBCELLULAR LOCATION</scope>
    <scope>DISRUPTION PHENOTYPE</scope>
    <scope>INTERACTION WITH AKIR-1</scope>
</reference>
<comment type="function">
    <text evidence="1 4 5 6">Nuclear transport receptor that mediates nuclear import of proteins, and which is involved in sister chromatid cohesion (PubMed:11311162, PubMed:12221121, PubMed:30563860). Binds specifically and directly to substrates containing either a simple or bipartite nuclear localization signals (NLS) motif (By similarity). Promotes docking of import substrates to the nuclear envelope (By similarity). Together with akir-1 adapter, required for the import and load of cohesin complex proteins in meiotic nuclei (PubMed:30563860).</text>
</comment>
<comment type="subunit">
    <text evidence="4 6">Forms a complex with an importin beta subunit (PubMed:11311162). Interacts with akir-1 (PubMed:30563860).</text>
</comment>
<comment type="subcellular location">
    <subcellularLocation>
        <location evidence="4 5">Cytoplasm</location>
    </subcellularLocation>
    <subcellularLocation>
        <location evidence="4 5 6">Nucleus</location>
    </subcellularLocation>
    <subcellularLocation>
        <location evidence="5">Nucleus envelope</location>
    </subcellularLocation>
    <text evidence="5">In interphase germ cells and embryonic cells, localizes to the cytoplasm and nuclear envelope, whereas in developing oocytes, it localizes in the cytoplasm and nucleus.</text>
</comment>
<comment type="tissue specificity">
    <text evidence="4 5">Germline tissues (PubMed:11311162, PubMed:12221121). Expressed exclusively in germ line cells from the early embryonic through adult stages (PubMed:12221121).</text>
</comment>
<comment type="developmental stage">
    <text evidence="4">Expressed weakly in early larvae, levels of expression increase in larval stage 4 and adult stages when germ cells are continually proliferating.</text>
</comment>
<comment type="disruption phenotype">
    <text evidence="5 6">Embryonic lethality associated with a terminal aneuploid phenotype: embryos display severe defects in nuclear envelope formation, accumulating nucleoporins and lamin in the cytoplasm (PubMed:12221121). Worms lacking both akir-1 and ima-2 show reduced gonad size and aberrant diakinesis oocyte formation; defects are caused by impaired meiotic recombination (PubMed:30563860).</text>
</comment>
<comment type="similarity">
    <text evidence="8">Belongs to the importin alpha family.</text>
</comment>
<feature type="chain" id="PRO_0000120735" description="Importin subunit alpha-2">
    <location>
        <begin position="1"/>
        <end position="531"/>
    </location>
</feature>
<feature type="domain" description="IBB" evidence="2">
    <location>
        <begin position="5"/>
        <end position="67"/>
    </location>
</feature>
<feature type="repeat" description="ARM 1" evidence="8">
    <location>
        <begin position="122"/>
        <end position="161"/>
    </location>
</feature>
<feature type="repeat" description="ARM 2" evidence="8">
    <location>
        <begin position="164"/>
        <end position="203"/>
    </location>
</feature>
<feature type="repeat" description="ARM 3" evidence="8">
    <location>
        <begin position="250"/>
        <end position="290"/>
    </location>
</feature>
<feature type="repeat" description="ARM 4" evidence="8">
    <location>
        <begin position="293"/>
        <end position="331"/>
    </location>
</feature>
<feature type="repeat" description="ARM 5" evidence="8">
    <location>
        <begin position="334"/>
        <end position="374"/>
    </location>
</feature>
<feature type="repeat" description="ARM 6" evidence="8">
    <location>
        <begin position="377"/>
        <end position="416"/>
    </location>
</feature>
<feature type="repeat" description="ARM 7" evidence="8">
    <location>
        <begin position="420"/>
        <end position="459"/>
    </location>
</feature>
<feature type="region of interest" description="Disordered" evidence="3">
    <location>
        <begin position="1"/>
        <end position="88"/>
    </location>
</feature>
<feature type="region of interest" description="Disordered" evidence="3">
    <location>
        <begin position="511"/>
        <end position="531"/>
    </location>
</feature>
<feature type="compositionally biased region" description="Polar residues" evidence="3">
    <location>
        <begin position="1"/>
        <end position="10"/>
    </location>
</feature>
<feature type="compositionally biased region" description="Basic and acidic residues" evidence="3">
    <location>
        <begin position="11"/>
        <end position="20"/>
    </location>
</feature>
<feature type="compositionally biased region" description="Basic and acidic residues" evidence="3">
    <location>
        <begin position="29"/>
        <end position="50"/>
    </location>
</feature>
<feature type="compositionally biased region" description="Acidic residues" evidence="3">
    <location>
        <begin position="62"/>
        <end position="75"/>
    </location>
</feature>
<feature type="compositionally biased region" description="Basic and acidic residues" evidence="3">
    <location>
        <begin position="515"/>
        <end position="531"/>
    </location>
</feature>
<evidence type="ECO:0000250" key="1">
    <source>
        <dbReference type="UniProtKB" id="Q19969"/>
    </source>
</evidence>
<evidence type="ECO:0000255" key="2">
    <source>
        <dbReference type="PROSITE-ProRule" id="PRU00561"/>
    </source>
</evidence>
<evidence type="ECO:0000256" key="3">
    <source>
        <dbReference type="SAM" id="MobiDB-lite"/>
    </source>
</evidence>
<evidence type="ECO:0000269" key="4">
    <source>
    </source>
</evidence>
<evidence type="ECO:0000269" key="5">
    <source>
    </source>
</evidence>
<evidence type="ECO:0000269" key="6">
    <source>
    </source>
</evidence>
<evidence type="ECO:0000303" key="7">
    <source>
    </source>
</evidence>
<evidence type="ECO:0000305" key="8"/>
<evidence type="ECO:0000312" key="9">
    <source>
        <dbReference type="EMBL" id="AAG49386.1"/>
    </source>
</evidence>
<evidence type="ECO:0000312" key="10">
    <source>
        <dbReference type="WormBase" id="F26B1.3"/>
    </source>
</evidence>
<organism evidence="9">
    <name type="scientific">Caenorhabditis elegans</name>
    <dbReference type="NCBI Taxonomy" id="6239"/>
    <lineage>
        <taxon>Eukaryota</taxon>
        <taxon>Metazoa</taxon>
        <taxon>Ecdysozoa</taxon>
        <taxon>Nematoda</taxon>
        <taxon>Chromadorea</taxon>
        <taxon>Rhabditida</taxon>
        <taxon>Rhabditina</taxon>
        <taxon>Rhabditomorpha</taxon>
        <taxon>Rhabditoidea</taxon>
        <taxon>Rhabditidae</taxon>
        <taxon>Peloderinae</taxon>
        <taxon>Caenorhabditis</taxon>
    </lineage>
</organism>
<proteinExistence type="evidence at protein level"/>
<protein>
    <recommendedName>
        <fullName>Importin subunit alpha-2</fullName>
    </recommendedName>
    <alternativeName>
        <fullName>Karyopherin subunit alpha-2</fullName>
    </alternativeName>
</protein>
<keyword id="KW-0963">Cytoplasm</keyword>
<keyword id="KW-0469">Meiosis</keyword>
<keyword id="KW-0539">Nucleus</keyword>
<keyword id="KW-0653">Protein transport</keyword>
<keyword id="KW-1185">Reference proteome</keyword>
<keyword id="KW-0677">Repeat</keyword>
<keyword id="KW-0813">Transport</keyword>
<name>IMA2_CAEEL</name>
<dbReference type="EMBL" id="AF040996">
    <property type="protein sequence ID" value="AAB97172.1"/>
    <property type="molecule type" value="mRNA"/>
</dbReference>
<dbReference type="EMBL" id="FO080500">
    <property type="protein sequence ID" value="CCD64196.1"/>
    <property type="molecule type" value="Genomic_DNA"/>
</dbReference>
<dbReference type="EMBL" id="AF326936">
    <property type="protein sequence ID" value="AAG49386.1"/>
    <property type="molecule type" value="mRNA"/>
</dbReference>
<dbReference type="PIR" id="T30167">
    <property type="entry name" value="T30167"/>
</dbReference>
<dbReference type="RefSeq" id="NP_491824.1">
    <property type="nucleotide sequence ID" value="NM_059423.8"/>
</dbReference>
<dbReference type="SMR" id="P91276"/>
<dbReference type="BioGRID" id="37782">
    <property type="interactions" value="11"/>
</dbReference>
<dbReference type="DIP" id="DIP-26785N"/>
<dbReference type="FunCoup" id="P91276">
    <property type="interactions" value="107"/>
</dbReference>
<dbReference type="IntAct" id="P91276">
    <property type="interactions" value="3"/>
</dbReference>
<dbReference type="STRING" id="6239.F26B1.3.1"/>
<dbReference type="iPTMnet" id="P91276"/>
<dbReference type="PaxDb" id="6239-F26B1.3"/>
<dbReference type="PeptideAtlas" id="P91276"/>
<dbReference type="EnsemblMetazoa" id="F26B1.3.1">
    <property type="protein sequence ID" value="F26B1.3.1"/>
    <property type="gene ID" value="WBGene00002073"/>
</dbReference>
<dbReference type="GeneID" id="172329"/>
<dbReference type="KEGG" id="cel:CELE_F26B1.3"/>
<dbReference type="UCSC" id="F26B1.3.1">
    <property type="organism name" value="c. elegans"/>
</dbReference>
<dbReference type="AGR" id="WB:WBGene00002073"/>
<dbReference type="CTD" id="172329"/>
<dbReference type="WormBase" id="F26B1.3">
    <property type="protein sequence ID" value="CE09675"/>
    <property type="gene ID" value="WBGene00002073"/>
    <property type="gene designation" value="ima-2"/>
</dbReference>
<dbReference type="eggNOG" id="KOG0166">
    <property type="taxonomic scope" value="Eukaryota"/>
</dbReference>
<dbReference type="GeneTree" id="ENSGT01050000244891"/>
<dbReference type="HOGENOM" id="CLU_018084_6_0_1"/>
<dbReference type="InParanoid" id="P91276"/>
<dbReference type="OMA" id="VKECCWL"/>
<dbReference type="OrthoDB" id="29145at2759"/>
<dbReference type="PhylomeDB" id="P91276"/>
<dbReference type="SignaLink" id="P91276"/>
<dbReference type="PRO" id="PR:P91276"/>
<dbReference type="Proteomes" id="UP000001940">
    <property type="component" value="Chromosome I"/>
</dbReference>
<dbReference type="Bgee" id="WBGene00002073">
    <property type="expression patterns" value="Expressed in germ line (C elegans) and 4 other cell types or tissues"/>
</dbReference>
<dbReference type="GO" id="GO:0005737">
    <property type="term" value="C:cytoplasm"/>
    <property type="evidence" value="ECO:0000314"/>
    <property type="project" value="UniProtKB"/>
</dbReference>
<dbReference type="GO" id="GO:0005635">
    <property type="term" value="C:nuclear envelope"/>
    <property type="evidence" value="ECO:0000314"/>
    <property type="project" value="WormBase"/>
</dbReference>
<dbReference type="GO" id="GO:0005643">
    <property type="term" value="C:nuclear pore"/>
    <property type="evidence" value="ECO:0000250"/>
    <property type="project" value="UniProtKB"/>
</dbReference>
<dbReference type="GO" id="GO:0005654">
    <property type="term" value="C:nucleoplasm"/>
    <property type="evidence" value="ECO:0000318"/>
    <property type="project" value="GO_Central"/>
</dbReference>
<dbReference type="GO" id="GO:0005634">
    <property type="term" value="C:nucleus"/>
    <property type="evidence" value="ECO:0000314"/>
    <property type="project" value="UniProtKB"/>
</dbReference>
<dbReference type="GO" id="GO:0061608">
    <property type="term" value="F:nuclear import signal receptor activity"/>
    <property type="evidence" value="ECO:0000315"/>
    <property type="project" value="UniProtKB"/>
</dbReference>
<dbReference type="GO" id="GO:0008139">
    <property type="term" value="F:nuclear localization sequence binding"/>
    <property type="evidence" value="ECO:0000318"/>
    <property type="project" value="GO_Central"/>
</dbReference>
<dbReference type="GO" id="GO:0009792">
    <property type="term" value="P:embryo development ending in birth or egg hatching"/>
    <property type="evidence" value="ECO:0000315"/>
    <property type="project" value="WormBase"/>
</dbReference>
<dbReference type="GO" id="GO:0051321">
    <property type="term" value="P:meiotic cell cycle"/>
    <property type="evidence" value="ECO:0007669"/>
    <property type="project" value="UniProtKB-KW"/>
</dbReference>
<dbReference type="GO" id="GO:0051177">
    <property type="term" value="P:meiotic sister chromatid cohesion"/>
    <property type="evidence" value="ECO:0000315"/>
    <property type="project" value="UniProtKB"/>
</dbReference>
<dbReference type="GO" id="GO:0007084">
    <property type="term" value="P:mitotic nuclear membrane reassembly"/>
    <property type="evidence" value="ECO:0000315"/>
    <property type="project" value="WormBase"/>
</dbReference>
<dbReference type="GO" id="GO:0006607">
    <property type="term" value="P:NLS-bearing protein import into nucleus"/>
    <property type="evidence" value="ECO:0000318"/>
    <property type="project" value="GO_Central"/>
</dbReference>
<dbReference type="GO" id="GO:0006606">
    <property type="term" value="P:protein import into nucleus"/>
    <property type="evidence" value="ECO:0000315"/>
    <property type="project" value="UniProtKB"/>
</dbReference>
<dbReference type="GO" id="GO:0051983">
    <property type="term" value="P:regulation of chromosome segregation"/>
    <property type="evidence" value="ECO:0000315"/>
    <property type="project" value="WormBase"/>
</dbReference>
<dbReference type="FunFam" id="1.20.5.690:FF:000007">
    <property type="entry name" value="Importin subunit alpha"/>
    <property type="match status" value="1"/>
</dbReference>
<dbReference type="Gene3D" id="1.20.5.690">
    <property type="entry name" value="Importin-alpha, importin-beta-binding domain"/>
    <property type="match status" value="1"/>
</dbReference>
<dbReference type="Gene3D" id="1.25.10.10">
    <property type="entry name" value="Leucine-rich Repeat Variant"/>
    <property type="match status" value="1"/>
</dbReference>
<dbReference type="InterPro" id="IPR011989">
    <property type="entry name" value="ARM-like"/>
</dbReference>
<dbReference type="InterPro" id="IPR016024">
    <property type="entry name" value="ARM-type_fold"/>
</dbReference>
<dbReference type="InterPro" id="IPR032413">
    <property type="entry name" value="Arm_3"/>
</dbReference>
<dbReference type="InterPro" id="IPR000225">
    <property type="entry name" value="Armadillo"/>
</dbReference>
<dbReference type="InterPro" id="IPR002652">
    <property type="entry name" value="Importin-a_IBB"/>
</dbReference>
<dbReference type="InterPro" id="IPR036975">
    <property type="entry name" value="Importin-a_IBB_sf"/>
</dbReference>
<dbReference type="InterPro" id="IPR024931">
    <property type="entry name" value="Importin_alpha"/>
</dbReference>
<dbReference type="PANTHER" id="PTHR23316">
    <property type="entry name" value="IMPORTIN ALPHA"/>
    <property type="match status" value="1"/>
</dbReference>
<dbReference type="Pfam" id="PF00514">
    <property type="entry name" value="Arm"/>
    <property type="match status" value="5"/>
</dbReference>
<dbReference type="Pfam" id="PF16186">
    <property type="entry name" value="Arm_3"/>
    <property type="match status" value="1"/>
</dbReference>
<dbReference type="Pfam" id="PF01749">
    <property type="entry name" value="IBB"/>
    <property type="match status" value="1"/>
</dbReference>
<dbReference type="PIRSF" id="PIRSF005673">
    <property type="entry name" value="Importin_alpha"/>
    <property type="match status" value="1"/>
</dbReference>
<dbReference type="SMART" id="SM00185">
    <property type="entry name" value="ARM"/>
    <property type="match status" value="8"/>
</dbReference>
<dbReference type="SUPFAM" id="SSF48371">
    <property type="entry name" value="ARM repeat"/>
    <property type="match status" value="1"/>
</dbReference>
<dbReference type="PROSITE" id="PS50176">
    <property type="entry name" value="ARM_REPEAT"/>
    <property type="match status" value="1"/>
</dbReference>
<dbReference type="PROSITE" id="PS51214">
    <property type="entry name" value="IBB"/>
    <property type="match status" value="1"/>
</dbReference>